<accession>A0QL18</accession>
<keyword id="KW-0687">Ribonucleoprotein</keyword>
<keyword id="KW-0689">Ribosomal protein</keyword>
<keyword id="KW-0694">RNA-binding</keyword>
<keyword id="KW-0699">rRNA-binding</keyword>
<dbReference type="EMBL" id="CP000479">
    <property type="protein sequence ID" value="ABK65247.1"/>
    <property type="molecule type" value="Genomic_DNA"/>
</dbReference>
<dbReference type="RefSeq" id="WP_003873518.1">
    <property type="nucleotide sequence ID" value="NC_008595.1"/>
</dbReference>
<dbReference type="SMR" id="A0QL18"/>
<dbReference type="GeneID" id="75271985"/>
<dbReference type="KEGG" id="mav:MAV_4471"/>
<dbReference type="HOGENOM" id="CLU_044142_4_1_11"/>
<dbReference type="Proteomes" id="UP000001574">
    <property type="component" value="Chromosome"/>
</dbReference>
<dbReference type="GO" id="GO:0022625">
    <property type="term" value="C:cytosolic large ribosomal subunit"/>
    <property type="evidence" value="ECO:0007669"/>
    <property type="project" value="TreeGrafter"/>
</dbReference>
<dbReference type="GO" id="GO:0019843">
    <property type="term" value="F:rRNA binding"/>
    <property type="evidence" value="ECO:0007669"/>
    <property type="project" value="UniProtKB-UniRule"/>
</dbReference>
<dbReference type="GO" id="GO:0003735">
    <property type="term" value="F:structural constituent of ribosome"/>
    <property type="evidence" value="ECO:0007669"/>
    <property type="project" value="InterPro"/>
</dbReference>
<dbReference type="GO" id="GO:0006412">
    <property type="term" value="P:translation"/>
    <property type="evidence" value="ECO:0007669"/>
    <property type="project" value="UniProtKB-UniRule"/>
</dbReference>
<dbReference type="FunFam" id="2.40.30.10:FF:000004">
    <property type="entry name" value="50S ribosomal protein L3"/>
    <property type="match status" value="1"/>
</dbReference>
<dbReference type="FunFam" id="3.30.160.810:FF:000001">
    <property type="entry name" value="50S ribosomal protein L3"/>
    <property type="match status" value="1"/>
</dbReference>
<dbReference type="Gene3D" id="3.30.160.810">
    <property type="match status" value="1"/>
</dbReference>
<dbReference type="Gene3D" id="2.40.30.10">
    <property type="entry name" value="Translation factors"/>
    <property type="match status" value="1"/>
</dbReference>
<dbReference type="HAMAP" id="MF_01325_B">
    <property type="entry name" value="Ribosomal_uL3_B"/>
    <property type="match status" value="1"/>
</dbReference>
<dbReference type="InterPro" id="IPR000597">
    <property type="entry name" value="Ribosomal_uL3"/>
</dbReference>
<dbReference type="InterPro" id="IPR019927">
    <property type="entry name" value="Ribosomal_uL3_bac/org-type"/>
</dbReference>
<dbReference type="InterPro" id="IPR019926">
    <property type="entry name" value="Ribosomal_uL3_CS"/>
</dbReference>
<dbReference type="InterPro" id="IPR009000">
    <property type="entry name" value="Transl_B-barrel_sf"/>
</dbReference>
<dbReference type="NCBIfam" id="TIGR03625">
    <property type="entry name" value="L3_bact"/>
    <property type="match status" value="1"/>
</dbReference>
<dbReference type="PANTHER" id="PTHR11229">
    <property type="entry name" value="50S RIBOSOMAL PROTEIN L3"/>
    <property type="match status" value="1"/>
</dbReference>
<dbReference type="PANTHER" id="PTHR11229:SF16">
    <property type="entry name" value="LARGE RIBOSOMAL SUBUNIT PROTEIN UL3C"/>
    <property type="match status" value="1"/>
</dbReference>
<dbReference type="Pfam" id="PF00297">
    <property type="entry name" value="Ribosomal_L3"/>
    <property type="match status" value="1"/>
</dbReference>
<dbReference type="SUPFAM" id="SSF50447">
    <property type="entry name" value="Translation proteins"/>
    <property type="match status" value="1"/>
</dbReference>
<dbReference type="PROSITE" id="PS00474">
    <property type="entry name" value="RIBOSOMAL_L3"/>
    <property type="match status" value="1"/>
</dbReference>
<comment type="function">
    <text evidence="1">One of the primary rRNA binding proteins, it binds directly near the 3'-end of the 23S rRNA, where it nucleates assembly of the 50S subunit.</text>
</comment>
<comment type="subunit">
    <text evidence="1">Part of the 50S ribosomal subunit. Forms a cluster with proteins L14 and L19.</text>
</comment>
<comment type="similarity">
    <text evidence="1">Belongs to the universal ribosomal protein uL3 family.</text>
</comment>
<feature type="chain" id="PRO_1000052086" description="Large ribosomal subunit protein uL3">
    <location>
        <begin position="1"/>
        <end position="217"/>
    </location>
</feature>
<proteinExistence type="inferred from homology"/>
<evidence type="ECO:0000255" key="1">
    <source>
        <dbReference type="HAMAP-Rule" id="MF_01325"/>
    </source>
</evidence>
<evidence type="ECO:0000305" key="2"/>
<protein>
    <recommendedName>
        <fullName evidence="1">Large ribosomal subunit protein uL3</fullName>
    </recommendedName>
    <alternativeName>
        <fullName evidence="2">50S ribosomal protein L3</fullName>
    </alternativeName>
</protein>
<sequence length="217" mass="23083">MARKGILGTKLGMTQVFDENNRVVPVTVVKAGPNVVTRIRTPEQDGYSAVQLAYGEISPRKVNKPVTGQYAAAGINPRRFLAELRLDNPDAAAEYQVGQELTAEIFTDGSYVDVTGTSKGKGFAGTMKRHGFRGQGASHGAQAVHRRPGSIGGCATPARVFKGTRMAGRMGNDRVTVQNLLVHKVDTENGVLLIKGAVPGRTGGLVMVRSAVKRGEK</sequence>
<organism>
    <name type="scientific">Mycobacterium avium (strain 104)</name>
    <dbReference type="NCBI Taxonomy" id="243243"/>
    <lineage>
        <taxon>Bacteria</taxon>
        <taxon>Bacillati</taxon>
        <taxon>Actinomycetota</taxon>
        <taxon>Actinomycetes</taxon>
        <taxon>Mycobacteriales</taxon>
        <taxon>Mycobacteriaceae</taxon>
        <taxon>Mycobacterium</taxon>
        <taxon>Mycobacterium avium complex (MAC)</taxon>
    </lineage>
</organism>
<name>RL3_MYCA1</name>
<gene>
    <name evidence="1" type="primary">rplC</name>
    <name type="ordered locus">MAV_4471</name>
</gene>
<reference key="1">
    <citation type="submission" date="2006-10" db="EMBL/GenBank/DDBJ databases">
        <authorList>
            <person name="Fleischmann R.D."/>
            <person name="Dodson R.J."/>
            <person name="Haft D.H."/>
            <person name="Merkel J.S."/>
            <person name="Nelson W.C."/>
            <person name="Fraser C.M."/>
        </authorList>
    </citation>
    <scope>NUCLEOTIDE SEQUENCE [LARGE SCALE GENOMIC DNA]</scope>
    <source>
        <strain>104</strain>
    </source>
</reference>